<accession>Q1J162</accession>
<protein>
    <recommendedName>
        <fullName evidence="1">Large ribosomal subunit protein bL25</fullName>
    </recommendedName>
    <alternativeName>
        <fullName evidence="3">50S ribosomal protein L25</fullName>
    </alternativeName>
    <alternativeName>
        <fullName evidence="1">General stress protein CTC</fullName>
    </alternativeName>
</protein>
<comment type="function">
    <text evidence="1">This is one of the proteins that binds to the 5S RNA in the ribosome where it forms part of the central protuberance.</text>
</comment>
<comment type="subunit">
    <text evidence="1">Part of the 50S ribosomal subunit; part of the 5S rRNA/L5/L18/L25 subcomplex. Contacts the 5S rRNA. Binds to the 5S rRNA independently of L5 and L18.</text>
</comment>
<comment type="similarity">
    <text evidence="1">Belongs to the bacterial ribosomal protein bL25 family. CTC subfamily.</text>
</comment>
<dbReference type="EMBL" id="CP000359">
    <property type="protein sequence ID" value="ABF44772.1"/>
    <property type="molecule type" value="Genomic_DNA"/>
</dbReference>
<dbReference type="RefSeq" id="WP_011529614.1">
    <property type="nucleotide sequence ID" value="NC_008025.1"/>
</dbReference>
<dbReference type="SMR" id="Q1J162"/>
<dbReference type="STRING" id="319795.Dgeo_0469"/>
<dbReference type="KEGG" id="dge:Dgeo_0469"/>
<dbReference type="eggNOG" id="COG1825">
    <property type="taxonomic scope" value="Bacteria"/>
</dbReference>
<dbReference type="HOGENOM" id="CLU_075939_2_0_0"/>
<dbReference type="Proteomes" id="UP000002431">
    <property type="component" value="Chromosome"/>
</dbReference>
<dbReference type="GO" id="GO:0022625">
    <property type="term" value="C:cytosolic large ribosomal subunit"/>
    <property type="evidence" value="ECO:0007669"/>
    <property type="project" value="TreeGrafter"/>
</dbReference>
<dbReference type="GO" id="GO:0008097">
    <property type="term" value="F:5S rRNA binding"/>
    <property type="evidence" value="ECO:0007669"/>
    <property type="project" value="InterPro"/>
</dbReference>
<dbReference type="GO" id="GO:0003735">
    <property type="term" value="F:structural constituent of ribosome"/>
    <property type="evidence" value="ECO:0007669"/>
    <property type="project" value="InterPro"/>
</dbReference>
<dbReference type="GO" id="GO:0006412">
    <property type="term" value="P:translation"/>
    <property type="evidence" value="ECO:0007669"/>
    <property type="project" value="UniProtKB-UniRule"/>
</dbReference>
<dbReference type="CDD" id="cd00495">
    <property type="entry name" value="Ribosomal_L25_TL5_CTC"/>
    <property type="match status" value="1"/>
</dbReference>
<dbReference type="Gene3D" id="2.170.120.20">
    <property type="entry name" value="Ribosomal protein L25, beta domain"/>
    <property type="match status" value="1"/>
</dbReference>
<dbReference type="Gene3D" id="2.40.240.10">
    <property type="entry name" value="Ribosomal Protein L25, Chain P"/>
    <property type="match status" value="1"/>
</dbReference>
<dbReference type="HAMAP" id="MF_01334">
    <property type="entry name" value="Ribosomal_bL25_CTC"/>
    <property type="match status" value="1"/>
</dbReference>
<dbReference type="InterPro" id="IPR020056">
    <property type="entry name" value="Rbsml_bL25/Gln-tRNA_synth_N"/>
</dbReference>
<dbReference type="InterPro" id="IPR011035">
    <property type="entry name" value="Ribosomal_bL25/Gln-tRNA_synth"/>
</dbReference>
<dbReference type="InterPro" id="IPR020057">
    <property type="entry name" value="Ribosomal_bL25_b-dom"/>
</dbReference>
<dbReference type="InterPro" id="IPR037121">
    <property type="entry name" value="Ribosomal_bL25_C"/>
</dbReference>
<dbReference type="InterPro" id="IPR001021">
    <property type="entry name" value="Ribosomal_bL25_long"/>
</dbReference>
<dbReference type="InterPro" id="IPR029751">
    <property type="entry name" value="Ribosomal_L25_dom"/>
</dbReference>
<dbReference type="InterPro" id="IPR020930">
    <property type="entry name" value="Ribosomal_uL5_bac-type"/>
</dbReference>
<dbReference type="NCBIfam" id="TIGR00731">
    <property type="entry name" value="bL25_bact_ctc"/>
    <property type="match status" value="1"/>
</dbReference>
<dbReference type="NCBIfam" id="NF004137">
    <property type="entry name" value="PRK05618.3-3"/>
    <property type="match status" value="1"/>
</dbReference>
<dbReference type="PANTHER" id="PTHR33284">
    <property type="entry name" value="RIBOSOMAL PROTEIN L25/GLN-TRNA SYNTHETASE, ANTI-CODON-BINDING DOMAIN-CONTAINING PROTEIN"/>
    <property type="match status" value="1"/>
</dbReference>
<dbReference type="PANTHER" id="PTHR33284:SF1">
    <property type="entry name" value="RIBOSOMAL PROTEIN L25_GLN-TRNA SYNTHETASE, ANTI-CODON-BINDING DOMAIN-CONTAINING PROTEIN"/>
    <property type="match status" value="1"/>
</dbReference>
<dbReference type="Pfam" id="PF01386">
    <property type="entry name" value="Ribosomal_L25p"/>
    <property type="match status" value="1"/>
</dbReference>
<dbReference type="Pfam" id="PF14693">
    <property type="entry name" value="Ribosomal_TL5_C"/>
    <property type="match status" value="1"/>
</dbReference>
<dbReference type="SUPFAM" id="SSF50715">
    <property type="entry name" value="Ribosomal protein L25-like"/>
    <property type="match status" value="1"/>
</dbReference>
<keyword id="KW-0687">Ribonucleoprotein</keyword>
<keyword id="KW-0689">Ribosomal protein</keyword>
<keyword id="KW-0694">RNA-binding</keyword>
<keyword id="KW-0699">rRNA-binding</keyword>
<sequence>MELKATPRKSQEKLAPGMIPAVAYNKEKNVTFAIERKAFDRAFRQQGTTGLFDIVIEGGETFPALVKAVQMDKRRREAIHADFYMVTYGEPVEVSVPVHTTGKSQGEIQGGLVDVVVHSLNVIAPGPRRIPQEITVDVTNLNIGDHVTAGQIKLPEGVKLAVEPDLVVLSVLPPRLSAEELEAQAQAAQVAGMVASGELSEAAAEAVLEGSASLDAVKAGEEGSRAQQETEEASERADQGQ</sequence>
<evidence type="ECO:0000255" key="1">
    <source>
        <dbReference type="HAMAP-Rule" id="MF_01334"/>
    </source>
</evidence>
<evidence type="ECO:0000256" key="2">
    <source>
        <dbReference type="SAM" id="MobiDB-lite"/>
    </source>
</evidence>
<evidence type="ECO:0000305" key="3"/>
<name>RL25_DEIGD</name>
<feature type="chain" id="PRO_1000052886" description="Large ribosomal subunit protein bL25">
    <location>
        <begin position="1"/>
        <end position="241"/>
    </location>
</feature>
<feature type="region of interest" description="Disordered" evidence="2">
    <location>
        <begin position="214"/>
        <end position="241"/>
    </location>
</feature>
<gene>
    <name evidence="1" type="primary">rplY</name>
    <name evidence="1" type="synonym">ctc</name>
    <name type="ordered locus">Dgeo_0469</name>
</gene>
<proteinExistence type="inferred from homology"/>
<organism>
    <name type="scientific">Deinococcus geothermalis (strain DSM 11300 / CIP 105573 / AG-3a)</name>
    <dbReference type="NCBI Taxonomy" id="319795"/>
    <lineage>
        <taxon>Bacteria</taxon>
        <taxon>Thermotogati</taxon>
        <taxon>Deinococcota</taxon>
        <taxon>Deinococci</taxon>
        <taxon>Deinococcales</taxon>
        <taxon>Deinococcaceae</taxon>
        <taxon>Deinococcus</taxon>
    </lineage>
</organism>
<reference key="1">
    <citation type="submission" date="2006-04" db="EMBL/GenBank/DDBJ databases">
        <title>Complete sequence of chromosome of Deinococcus geothermalis DSM 11300.</title>
        <authorList>
            <person name="Copeland A."/>
            <person name="Lucas S."/>
            <person name="Lapidus A."/>
            <person name="Barry K."/>
            <person name="Detter J.C."/>
            <person name="Glavina del Rio T."/>
            <person name="Hammon N."/>
            <person name="Israni S."/>
            <person name="Dalin E."/>
            <person name="Tice H."/>
            <person name="Pitluck S."/>
            <person name="Brettin T."/>
            <person name="Bruce D."/>
            <person name="Han C."/>
            <person name="Tapia R."/>
            <person name="Saunders E."/>
            <person name="Gilna P."/>
            <person name="Schmutz J."/>
            <person name="Larimer F."/>
            <person name="Land M."/>
            <person name="Hauser L."/>
            <person name="Kyrpides N."/>
            <person name="Kim E."/>
            <person name="Daly M.J."/>
            <person name="Fredrickson J.K."/>
            <person name="Makarova K.S."/>
            <person name="Gaidamakova E.K."/>
            <person name="Zhai M."/>
            <person name="Richardson P."/>
        </authorList>
    </citation>
    <scope>NUCLEOTIDE SEQUENCE [LARGE SCALE GENOMIC DNA]</scope>
    <source>
        <strain>DSM 11300 / CIP 105573 / AG-3a</strain>
    </source>
</reference>